<keyword id="KW-0963">Cytoplasm</keyword>
<keyword id="KW-0328">Glycosyltransferase</keyword>
<keyword id="KW-0660">Purine salvage</keyword>
<keyword id="KW-0808">Transferase</keyword>
<protein>
    <recommendedName>
        <fullName evidence="1">Xanthine phosphoribosyltransferase</fullName>
        <shortName evidence="1">XPRTase</shortName>
        <ecNumber evidence="1">2.4.2.22</ecNumber>
    </recommendedName>
</protein>
<comment type="function">
    <text evidence="1">Converts the preformed base xanthine, a product of nucleic acid breakdown, to xanthosine 5'-monophosphate (XMP), so it can be reused for RNA or DNA synthesis.</text>
</comment>
<comment type="catalytic activity">
    <reaction evidence="1">
        <text>XMP + diphosphate = xanthine + 5-phospho-alpha-D-ribose 1-diphosphate</text>
        <dbReference type="Rhea" id="RHEA:10800"/>
        <dbReference type="ChEBI" id="CHEBI:17712"/>
        <dbReference type="ChEBI" id="CHEBI:33019"/>
        <dbReference type="ChEBI" id="CHEBI:57464"/>
        <dbReference type="ChEBI" id="CHEBI:58017"/>
        <dbReference type="EC" id="2.4.2.22"/>
    </reaction>
</comment>
<comment type="pathway">
    <text evidence="1">Purine metabolism; XMP biosynthesis via salvage pathway; XMP from xanthine: step 1/1.</text>
</comment>
<comment type="subunit">
    <text evidence="1">Homodimer.</text>
</comment>
<comment type="subcellular location">
    <subcellularLocation>
        <location evidence="1">Cytoplasm</location>
    </subcellularLocation>
</comment>
<comment type="similarity">
    <text evidence="1">Belongs to the purine/pyrimidine phosphoribosyltransferase family. Xpt subfamily.</text>
</comment>
<feature type="chain" id="PRO_1000138245" description="Xanthine phosphoribosyltransferase">
    <location>
        <begin position="1"/>
        <end position="193"/>
    </location>
</feature>
<feature type="binding site" evidence="1">
    <location>
        <position position="20"/>
    </location>
    <ligand>
        <name>xanthine</name>
        <dbReference type="ChEBI" id="CHEBI:17712"/>
    </ligand>
</feature>
<feature type="binding site" evidence="1">
    <location>
        <position position="27"/>
    </location>
    <ligand>
        <name>xanthine</name>
        <dbReference type="ChEBI" id="CHEBI:17712"/>
    </ligand>
</feature>
<feature type="binding site" evidence="1">
    <location>
        <begin position="128"/>
        <end position="132"/>
    </location>
    <ligand>
        <name>5-phospho-alpha-D-ribose 1-diphosphate</name>
        <dbReference type="ChEBI" id="CHEBI:58017"/>
    </ligand>
</feature>
<feature type="binding site" evidence="1">
    <location>
        <position position="156"/>
    </location>
    <ligand>
        <name>xanthine</name>
        <dbReference type="ChEBI" id="CHEBI:17712"/>
    </ligand>
</feature>
<organism>
    <name type="scientific">Streptococcus pneumoniae (strain CGSP14)</name>
    <dbReference type="NCBI Taxonomy" id="516950"/>
    <lineage>
        <taxon>Bacteria</taxon>
        <taxon>Bacillati</taxon>
        <taxon>Bacillota</taxon>
        <taxon>Bacilli</taxon>
        <taxon>Lactobacillales</taxon>
        <taxon>Streptococcaceae</taxon>
        <taxon>Streptococcus</taxon>
    </lineage>
</organism>
<dbReference type="EC" id="2.4.2.22" evidence="1"/>
<dbReference type="EMBL" id="CP001033">
    <property type="protein sequence ID" value="ACB91073.1"/>
    <property type="molecule type" value="Genomic_DNA"/>
</dbReference>
<dbReference type="RefSeq" id="WP_000770405.1">
    <property type="nucleotide sequence ID" value="NC_010582.1"/>
</dbReference>
<dbReference type="SMR" id="B2ISU6"/>
<dbReference type="KEGG" id="spw:SPCG_1821"/>
<dbReference type="HOGENOM" id="CLU_099015_0_0_9"/>
<dbReference type="UniPathway" id="UPA00602">
    <property type="reaction ID" value="UER00658"/>
</dbReference>
<dbReference type="GO" id="GO:0005737">
    <property type="term" value="C:cytoplasm"/>
    <property type="evidence" value="ECO:0007669"/>
    <property type="project" value="UniProtKB-SubCell"/>
</dbReference>
<dbReference type="GO" id="GO:0000310">
    <property type="term" value="F:xanthine phosphoribosyltransferase activity"/>
    <property type="evidence" value="ECO:0007669"/>
    <property type="project" value="UniProtKB-UniRule"/>
</dbReference>
<dbReference type="GO" id="GO:0006166">
    <property type="term" value="P:purine ribonucleoside salvage"/>
    <property type="evidence" value="ECO:0007669"/>
    <property type="project" value="UniProtKB-KW"/>
</dbReference>
<dbReference type="GO" id="GO:0046110">
    <property type="term" value="P:xanthine metabolic process"/>
    <property type="evidence" value="ECO:0007669"/>
    <property type="project" value="InterPro"/>
</dbReference>
<dbReference type="GO" id="GO:0032265">
    <property type="term" value="P:XMP salvage"/>
    <property type="evidence" value="ECO:0007669"/>
    <property type="project" value="UniProtKB-UniRule"/>
</dbReference>
<dbReference type="CDD" id="cd06223">
    <property type="entry name" value="PRTases_typeI"/>
    <property type="match status" value="1"/>
</dbReference>
<dbReference type="Gene3D" id="3.40.50.2020">
    <property type="match status" value="1"/>
</dbReference>
<dbReference type="HAMAP" id="MF_01184">
    <property type="entry name" value="XPRTase"/>
    <property type="match status" value="1"/>
</dbReference>
<dbReference type="InterPro" id="IPR000836">
    <property type="entry name" value="PRibTrfase_dom"/>
</dbReference>
<dbReference type="InterPro" id="IPR029057">
    <property type="entry name" value="PRTase-like"/>
</dbReference>
<dbReference type="InterPro" id="IPR050118">
    <property type="entry name" value="Pur/Pyrimidine_PRTase"/>
</dbReference>
<dbReference type="InterPro" id="IPR010079">
    <property type="entry name" value="Xanthine_PRibTrfase"/>
</dbReference>
<dbReference type="NCBIfam" id="NF006671">
    <property type="entry name" value="PRK09219.1"/>
    <property type="match status" value="1"/>
</dbReference>
<dbReference type="NCBIfam" id="TIGR01744">
    <property type="entry name" value="XPRTase"/>
    <property type="match status" value="1"/>
</dbReference>
<dbReference type="PANTHER" id="PTHR43864">
    <property type="entry name" value="HYPOXANTHINE/GUANINE PHOSPHORIBOSYLTRANSFERASE"/>
    <property type="match status" value="1"/>
</dbReference>
<dbReference type="PANTHER" id="PTHR43864:SF1">
    <property type="entry name" value="XANTHINE PHOSPHORIBOSYLTRANSFERASE"/>
    <property type="match status" value="1"/>
</dbReference>
<dbReference type="Pfam" id="PF00156">
    <property type="entry name" value="Pribosyltran"/>
    <property type="match status" value="1"/>
</dbReference>
<dbReference type="SUPFAM" id="SSF53271">
    <property type="entry name" value="PRTase-like"/>
    <property type="match status" value="1"/>
</dbReference>
<gene>
    <name evidence="1" type="primary">xpt</name>
    <name type="ordered locus">SPCG_1821</name>
</gene>
<proteinExistence type="inferred from homology"/>
<name>XPT_STRPS</name>
<evidence type="ECO:0000255" key="1">
    <source>
        <dbReference type="HAMAP-Rule" id="MF_01184"/>
    </source>
</evidence>
<sequence length="193" mass="20955">MKLLEERILKDGHILGDNILKVDSFLTHQVDFSLMREIGKVFAEKFAAAGITKVVTIEASGIAPAVFTAEALNVPMIFAKKAKNITMNEGILTAQVYSFTKQVTSTVSIAGKFLSPEDKVLIIDDFLANGQAAKGLIQIIEQAGATVQAIGIVIEKSFQDGRDLLEKAGYPVLSLARLDRFENGQVVFKEADL</sequence>
<accession>B2ISU6</accession>
<reference key="1">
    <citation type="journal article" date="2009" name="BMC Genomics">
        <title>Genome evolution driven by host adaptations results in a more virulent and antimicrobial-resistant Streptococcus pneumoniae serotype 14.</title>
        <authorList>
            <person name="Ding F."/>
            <person name="Tang P."/>
            <person name="Hsu M.-H."/>
            <person name="Cui P."/>
            <person name="Hu S."/>
            <person name="Yu J."/>
            <person name="Chiu C.-H."/>
        </authorList>
    </citation>
    <scope>NUCLEOTIDE SEQUENCE [LARGE SCALE GENOMIC DNA]</scope>
    <source>
        <strain>CGSP14</strain>
    </source>
</reference>